<keyword id="KW-0964">Secreted</keyword>
<keyword id="KW-0732">Signal</keyword>
<organism>
    <name type="scientific">Staphylococcus aureus (strain N315)</name>
    <dbReference type="NCBI Taxonomy" id="158879"/>
    <lineage>
        <taxon>Bacteria</taxon>
        <taxon>Bacillati</taxon>
        <taxon>Bacillota</taxon>
        <taxon>Bacilli</taxon>
        <taxon>Bacillales</taxon>
        <taxon>Staphylococcaceae</taxon>
        <taxon>Staphylococcus</taxon>
    </lineage>
</organism>
<comment type="subcellular location">
    <subcellularLocation>
        <location evidence="1">Secreted</location>
    </subcellularLocation>
</comment>
<comment type="similarity">
    <text evidence="2">Belongs to the IsaB family.</text>
</comment>
<evidence type="ECO:0000250" key="1"/>
<evidence type="ECO:0000305" key="2"/>
<dbReference type="EMBL" id="BA000018">
    <property type="protein sequence ID" value="BAB43736.1"/>
    <property type="molecule type" value="Genomic_DNA"/>
</dbReference>
<dbReference type="PIR" id="F90071">
    <property type="entry name" value="F90071"/>
</dbReference>
<dbReference type="RefSeq" id="WP_001044560.1">
    <property type="nucleotide sequence ID" value="NC_002745.2"/>
</dbReference>
<dbReference type="SMR" id="Q7A377"/>
<dbReference type="EnsemblBacteria" id="BAB43736">
    <property type="protein sequence ID" value="BAB43736"/>
    <property type="gene ID" value="BAB43736"/>
</dbReference>
<dbReference type="KEGG" id="sau:SA2431"/>
<dbReference type="HOGENOM" id="CLU_119552_0_0_9"/>
<dbReference type="GO" id="GO:0005576">
    <property type="term" value="C:extracellular region"/>
    <property type="evidence" value="ECO:0007669"/>
    <property type="project" value="UniProtKB-SubCell"/>
</dbReference>
<dbReference type="NCBIfam" id="NF047686">
    <property type="entry name" value="IsaB_fam"/>
    <property type="match status" value="1"/>
</dbReference>
<feature type="signal peptide" evidence="1">
    <location>
        <begin position="1"/>
        <end position="36"/>
    </location>
</feature>
<feature type="chain" id="PRO_0000272667" description="Immunodominant staphylococcal antigen B">
    <location>
        <begin position="37"/>
        <end position="175"/>
    </location>
</feature>
<gene>
    <name type="primary">isaB</name>
    <name type="ordered locus">SA2431</name>
</gene>
<accession>Q7A377</accession>
<name>ISAB_STAAN</name>
<sequence length="175" mass="19370">MNKTSKVCVAATLALGTLIGVTVVENSAPTSKQAQAAITPYYTYNGYIGNNANFILDKNFINAIKYDNVKFNGIKLAKTNTIKKVEKYDQTFKGVSAKGNEASQLQFVVKNNISLKDIQKAYGKDLKKENGKTKEADSGIFYYQNAKKTLGIWFVVDHNRVVEVTVGHTPYKTSK</sequence>
<protein>
    <recommendedName>
        <fullName>Immunodominant staphylococcal antigen B</fullName>
    </recommendedName>
</protein>
<reference key="1">
    <citation type="journal article" date="2001" name="Lancet">
        <title>Whole genome sequencing of meticillin-resistant Staphylococcus aureus.</title>
        <authorList>
            <person name="Kuroda M."/>
            <person name="Ohta T."/>
            <person name="Uchiyama I."/>
            <person name="Baba T."/>
            <person name="Yuzawa H."/>
            <person name="Kobayashi I."/>
            <person name="Cui L."/>
            <person name="Oguchi A."/>
            <person name="Aoki K."/>
            <person name="Nagai Y."/>
            <person name="Lian J.-Q."/>
            <person name="Ito T."/>
            <person name="Kanamori M."/>
            <person name="Matsumaru H."/>
            <person name="Maruyama A."/>
            <person name="Murakami H."/>
            <person name="Hosoyama A."/>
            <person name="Mizutani-Ui Y."/>
            <person name="Takahashi N.K."/>
            <person name="Sawano T."/>
            <person name="Inoue R."/>
            <person name="Kaito C."/>
            <person name="Sekimizu K."/>
            <person name="Hirakawa H."/>
            <person name="Kuhara S."/>
            <person name="Goto S."/>
            <person name="Yabuzaki J."/>
            <person name="Kanehisa M."/>
            <person name="Yamashita A."/>
            <person name="Oshima K."/>
            <person name="Furuya K."/>
            <person name="Yoshino C."/>
            <person name="Shiba T."/>
            <person name="Hattori M."/>
            <person name="Ogasawara N."/>
            <person name="Hayashi H."/>
            <person name="Hiramatsu K."/>
        </authorList>
    </citation>
    <scope>NUCLEOTIDE SEQUENCE [LARGE SCALE GENOMIC DNA]</scope>
    <source>
        <strain>N315</strain>
    </source>
</reference>
<reference key="2">
    <citation type="submission" date="2007-10" db="UniProtKB">
        <title>Shotgun proteomic analysis of total and membrane protein extracts of S. aureus strain N315.</title>
        <authorList>
            <person name="Vaezzadeh A.R."/>
            <person name="Deshusses J."/>
            <person name="Lescuyer P."/>
            <person name="Hochstrasser D.F."/>
        </authorList>
    </citation>
    <scope>IDENTIFICATION BY MASS SPECTROMETRY [LARGE SCALE ANALYSIS]</scope>
    <source>
        <strain>N315</strain>
    </source>
</reference>
<proteinExistence type="evidence at protein level"/>